<organism>
    <name type="scientific">Rattus norvegicus</name>
    <name type="common">Rat</name>
    <dbReference type="NCBI Taxonomy" id="10116"/>
    <lineage>
        <taxon>Eukaryota</taxon>
        <taxon>Metazoa</taxon>
        <taxon>Chordata</taxon>
        <taxon>Craniata</taxon>
        <taxon>Vertebrata</taxon>
        <taxon>Euteleostomi</taxon>
        <taxon>Mammalia</taxon>
        <taxon>Eutheria</taxon>
        <taxon>Euarchontoglires</taxon>
        <taxon>Glires</taxon>
        <taxon>Rodentia</taxon>
        <taxon>Myomorpha</taxon>
        <taxon>Muroidea</taxon>
        <taxon>Muridae</taxon>
        <taxon>Murinae</taxon>
        <taxon>Rattus</taxon>
    </lineage>
</organism>
<protein>
    <recommendedName>
        <fullName evidence="10">Fatty acid CoA ligase Acsl3</fullName>
    </recommendedName>
    <alternativeName>
        <fullName evidence="10">Arachidonate--CoA ligase Acsl3</fullName>
        <ecNumber evidence="6">6.2.1.15</ecNumber>
    </alternativeName>
    <alternativeName>
        <fullName>Brain acyl-CoA synthetase II</fullName>
    </alternativeName>
    <alternativeName>
        <fullName>Long-chain acyl-CoA synthetase 3</fullName>
        <shortName>LACS 3</shortName>
    </alternativeName>
    <alternativeName>
        <fullName evidence="10">Long-chain-fatty-acid--CoA ligase 3</fullName>
        <ecNumber evidence="6">6.2.1.3</ecNumber>
    </alternativeName>
    <alternativeName>
        <fullName evidence="10">Medium-chain acyl-CoA ligase Acsl3</fullName>
        <ecNumber evidence="7">6.2.1.2</ecNumber>
    </alternativeName>
</protein>
<gene>
    <name evidence="13" type="primary">Acsl3</name>
    <name type="synonym">Acs3</name>
    <name type="synonym">Facl3</name>
</gene>
<dbReference type="EC" id="6.2.1.15" evidence="6"/>
<dbReference type="EC" id="6.2.1.3" evidence="6"/>
<dbReference type="EC" id="6.2.1.2" evidence="7"/>
<dbReference type="EMBL" id="D30666">
    <property type="protein sequence ID" value="BAA06340.1"/>
    <property type="molecule type" value="mRNA"/>
</dbReference>
<dbReference type="RefSeq" id="NP_476448.1">
    <molecule id="Q63151-1"/>
    <property type="nucleotide sequence ID" value="NM_057107.2"/>
</dbReference>
<dbReference type="RefSeq" id="XP_063122603.1">
    <molecule id="Q63151-1"/>
    <property type="nucleotide sequence ID" value="XM_063266533.1"/>
</dbReference>
<dbReference type="SMR" id="Q63151"/>
<dbReference type="FunCoup" id="Q63151">
    <property type="interactions" value="3181"/>
</dbReference>
<dbReference type="IntAct" id="Q63151">
    <property type="interactions" value="1"/>
</dbReference>
<dbReference type="STRING" id="10116.ENSRNOP00000020161"/>
<dbReference type="SwissLipids" id="SLP:000001684"/>
<dbReference type="iPTMnet" id="Q63151"/>
<dbReference type="PhosphoSitePlus" id="Q63151"/>
<dbReference type="jPOST" id="Q63151"/>
<dbReference type="PaxDb" id="10116-ENSRNOP00000020161"/>
<dbReference type="GeneID" id="114024"/>
<dbReference type="KEGG" id="rno:114024"/>
<dbReference type="UCSC" id="RGD:70552">
    <molecule id="Q63151-1"/>
    <property type="organism name" value="rat"/>
</dbReference>
<dbReference type="AGR" id="RGD:70552"/>
<dbReference type="CTD" id="2181"/>
<dbReference type="RGD" id="70552">
    <property type="gene designation" value="Acsl3"/>
</dbReference>
<dbReference type="VEuPathDB" id="HostDB:ENSRNOG00000014718"/>
<dbReference type="eggNOG" id="KOG1180">
    <property type="taxonomic scope" value="Eukaryota"/>
</dbReference>
<dbReference type="HOGENOM" id="CLU_000022_45_2_1"/>
<dbReference type="InParanoid" id="Q63151"/>
<dbReference type="PhylomeDB" id="Q63151"/>
<dbReference type="TreeFam" id="TF314012"/>
<dbReference type="BRENDA" id="6.2.1.3">
    <property type="organism ID" value="5301"/>
</dbReference>
<dbReference type="Reactome" id="R-RNO-434313">
    <property type="pathway name" value="Intracellular metabolism of fatty acids regulates insulin secretion"/>
</dbReference>
<dbReference type="Reactome" id="R-RNO-75876">
    <property type="pathway name" value="Synthesis of very long-chain fatty acyl-CoAs"/>
</dbReference>
<dbReference type="SABIO-RK" id="Q63151"/>
<dbReference type="PRO" id="PR:Q63151"/>
<dbReference type="Proteomes" id="UP000002494">
    <property type="component" value="Chromosome 9"/>
</dbReference>
<dbReference type="Bgee" id="ENSRNOG00000014718">
    <property type="expression patterns" value="Expressed in cerebellum and 20 other cell types or tissues"/>
</dbReference>
<dbReference type="GO" id="GO:0005783">
    <property type="term" value="C:endoplasmic reticulum"/>
    <property type="evidence" value="ECO:0000266"/>
    <property type="project" value="RGD"/>
</dbReference>
<dbReference type="GO" id="GO:0005789">
    <property type="term" value="C:endoplasmic reticulum membrane"/>
    <property type="evidence" value="ECO:0007669"/>
    <property type="project" value="UniProtKB-SubCell"/>
</dbReference>
<dbReference type="GO" id="GO:0005794">
    <property type="term" value="C:Golgi apparatus"/>
    <property type="evidence" value="ECO:0000266"/>
    <property type="project" value="RGD"/>
</dbReference>
<dbReference type="GO" id="GO:0005811">
    <property type="term" value="C:lipid droplet"/>
    <property type="evidence" value="ECO:0000266"/>
    <property type="project" value="RGD"/>
</dbReference>
<dbReference type="GO" id="GO:0005741">
    <property type="term" value="C:mitochondrial outer membrane"/>
    <property type="evidence" value="ECO:0007669"/>
    <property type="project" value="UniProtKB-SubCell"/>
</dbReference>
<dbReference type="GO" id="GO:0048471">
    <property type="term" value="C:perinuclear region of cytoplasm"/>
    <property type="evidence" value="ECO:0000266"/>
    <property type="project" value="RGD"/>
</dbReference>
<dbReference type="GO" id="GO:0005778">
    <property type="term" value="C:peroxisomal membrane"/>
    <property type="evidence" value="ECO:0007669"/>
    <property type="project" value="UniProtKB-SubCell"/>
</dbReference>
<dbReference type="GO" id="GO:0005886">
    <property type="term" value="C:plasma membrane"/>
    <property type="evidence" value="ECO:0000318"/>
    <property type="project" value="GO_Central"/>
</dbReference>
<dbReference type="GO" id="GO:0047676">
    <property type="term" value="F:arachidonate-CoA ligase activity"/>
    <property type="evidence" value="ECO:0000314"/>
    <property type="project" value="UniProtKB"/>
</dbReference>
<dbReference type="GO" id="GO:0005524">
    <property type="term" value="F:ATP binding"/>
    <property type="evidence" value="ECO:0007669"/>
    <property type="project" value="UniProtKB-KW"/>
</dbReference>
<dbReference type="GO" id="GO:0004467">
    <property type="term" value="F:long-chain fatty acid-CoA ligase activity"/>
    <property type="evidence" value="ECO:0000314"/>
    <property type="project" value="UniProtKB"/>
</dbReference>
<dbReference type="GO" id="GO:0031956">
    <property type="term" value="F:medium-chain fatty acid-CoA ligase activity"/>
    <property type="evidence" value="ECO:0007669"/>
    <property type="project" value="RHEA"/>
</dbReference>
<dbReference type="GO" id="GO:0019904">
    <property type="term" value="F:protein domain specific binding"/>
    <property type="evidence" value="ECO:0000266"/>
    <property type="project" value="RGD"/>
</dbReference>
<dbReference type="GO" id="GO:0019901">
    <property type="term" value="F:protein kinase binding"/>
    <property type="evidence" value="ECO:0000266"/>
    <property type="project" value="RGD"/>
</dbReference>
<dbReference type="GO" id="GO:0006633">
    <property type="term" value="P:fatty acid biosynthetic process"/>
    <property type="evidence" value="ECO:0000314"/>
    <property type="project" value="RGD"/>
</dbReference>
<dbReference type="GO" id="GO:0044539">
    <property type="term" value="P:long-chain fatty acid import into cell"/>
    <property type="evidence" value="ECO:0000266"/>
    <property type="project" value="RGD"/>
</dbReference>
<dbReference type="GO" id="GO:0001676">
    <property type="term" value="P:long-chain fatty acid metabolic process"/>
    <property type="evidence" value="ECO:0000314"/>
    <property type="project" value="UniProtKB"/>
</dbReference>
<dbReference type="GO" id="GO:0035336">
    <property type="term" value="P:long-chain fatty-acyl-CoA metabolic process"/>
    <property type="evidence" value="ECO:0000318"/>
    <property type="project" value="GO_Central"/>
</dbReference>
<dbReference type="GO" id="GO:0030182">
    <property type="term" value="P:neuron differentiation"/>
    <property type="evidence" value="ECO:0000318"/>
    <property type="project" value="GO_Central"/>
</dbReference>
<dbReference type="GO" id="GO:0042998">
    <property type="term" value="P:positive regulation of Golgi to plasma membrane protein transport"/>
    <property type="evidence" value="ECO:0000266"/>
    <property type="project" value="RGD"/>
</dbReference>
<dbReference type="GO" id="GO:2001247">
    <property type="term" value="P:positive regulation of phosphatidylcholine biosynthetic process"/>
    <property type="evidence" value="ECO:0000266"/>
    <property type="project" value="RGD"/>
</dbReference>
<dbReference type="GO" id="GO:0051047">
    <property type="term" value="P:positive regulation of secretion"/>
    <property type="evidence" value="ECO:0000266"/>
    <property type="project" value="RGD"/>
</dbReference>
<dbReference type="GO" id="GO:0007584">
    <property type="term" value="P:response to nutrient"/>
    <property type="evidence" value="ECO:0000270"/>
    <property type="project" value="RGD"/>
</dbReference>
<dbReference type="GO" id="GO:0034379">
    <property type="term" value="P:very-low-density lipoprotein particle assembly"/>
    <property type="evidence" value="ECO:0000266"/>
    <property type="project" value="RGD"/>
</dbReference>
<dbReference type="CDD" id="cd17639">
    <property type="entry name" value="LC_FACS_euk1"/>
    <property type="match status" value="1"/>
</dbReference>
<dbReference type="Gene3D" id="3.40.50.12780">
    <property type="entry name" value="N-terminal domain of ligase-like"/>
    <property type="match status" value="1"/>
</dbReference>
<dbReference type="InterPro" id="IPR020845">
    <property type="entry name" value="AMP-binding_CS"/>
</dbReference>
<dbReference type="InterPro" id="IPR000873">
    <property type="entry name" value="AMP-dep_synth/lig_dom"/>
</dbReference>
<dbReference type="InterPro" id="IPR042099">
    <property type="entry name" value="ANL_N_sf"/>
</dbReference>
<dbReference type="PANTHER" id="PTHR43272:SF13">
    <property type="entry name" value="FATTY ACID COA LIGASE ACSL3"/>
    <property type="match status" value="1"/>
</dbReference>
<dbReference type="PANTHER" id="PTHR43272">
    <property type="entry name" value="LONG-CHAIN-FATTY-ACID--COA LIGASE"/>
    <property type="match status" value="1"/>
</dbReference>
<dbReference type="Pfam" id="PF00501">
    <property type="entry name" value="AMP-binding"/>
    <property type="match status" value="1"/>
</dbReference>
<dbReference type="SUPFAM" id="SSF56801">
    <property type="entry name" value="Acetyl-CoA synthetase-like"/>
    <property type="match status" value="1"/>
</dbReference>
<dbReference type="PROSITE" id="PS00455">
    <property type="entry name" value="AMP_BINDING"/>
    <property type="match status" value="1"/>
</dbReference>
<accession>Q63151</accession>
<comment type="function">
    <text evidence="1 2 4 5 6 7 8">Catalyzes the conversion of long-chain fatty acids to their active form acyl-CoA for both synthesis of cellular lipids, and degradation via beta-oxidation (PubMed:15683247, PubMed:19737935, PubMed:28209804). ACSL3 is required for the incorporation of fatty acids into phosphatidylcholine, the major phospholipid located on the surface of VLDL (very low density lipoproteins) (By similarity). Has mainly an anabolic role in energy metabolism. Mediates hepatic lipogenesis (PubMed:19737935). Preferentially uses myristate, laurate, arachidonate and eicosapentaenoate as substrates (PubMed:8663269, PubMed:9276691). Both isoforms exhibit the same level of activity (PubMed:9276691).</text>
</comment>
<comment type="catalytic activity">
    <reaction evidence="4 5 6 7 8">
        <text>a long-chain fatty acid + ATP + CoA = a long-chain fatty acyl-CoA + AMP + diphosphate</text>
        <dbReference type="Rhea" id="RHEA:15421"/>
        <dbReference type="ChEBI" id="CHEBI:30616"/>
        <dbReference type="ChEBI" id="CHEBI:33019"/>
        <dbReference type="ChEBI" id="CHEBI:57287"/>
        <dbReference type="ChEBI" id="CHEBI:57560"/>
        <dbReference type="ChEBI" id="CHEBI:83139"/>
        <dbReference type="ChEBI" id="CHEBI:456215"/>
        <dbReference type="EC" id="6.2.1.3"/>
    </reaction>
    <physiologicalReaction direction="left-to-right" evidence="6">
        <dbReference type="Rhea" id="RHEA:15422"/>
    </physiologicalReaction>
</comment>
<comment type="catalytic activity">
    <reaction evidence="6 7">
        <text>(5Z,8Z,11Z,14Z)-eicosatetraenoate + ATP + CoA = (5Z,8Z,11Z,14Z)-eicosatetraenoyl-CoA + AMP + diphosphate</text>
        <dbReference type="Rhea" id="RHEA:19713"/>
        <dbReference type="ChEBI" id="CHEBI:30616"/>
        <dbReference type="ChEBI" id="CHEBI:32395"/>
        <dbReference type="ChEBI" id="CHEBI:33019"/>
        <dbReference type="ChEBI" id="CHEBI:57287"/>
        <dbReference type="ChEBI" id="CHEBI:57368"/>
        <dbReference type="ChEBI" id="CHEBI:456215"/>
        <dbReference type="EC" id="6.2.1.15"/>
    </reaction>
    <physiologicalReaction direction="left-to-right" evidence="6">
        <dbReference type="Rhea" id="RHEA:19714"/>
    </physiologicalReaction>
</comment>
<comment type="catalytic activity">
    <reaction evidence="7">
        <text>a medium-chain fatty acid + ATP + CoA = a medium-chain fatty acyl-CoA + AMP + diphosphate</text>
        <dbReference type="Rhea" id="RHEA:48340"/>
        <dbReference type="ChEBI" id="CHEBI:30616"/>
        <dbReference type="ChEBI" id="CHEBI:33019"/>
        <dbReference type="ChEBI" id="CHEBI:57287"/>
        <dbReference type="ChEBI" id="CHEBI:59558"/>
        <dbReference type="ChEBI" id="CHEBI:90546"/>
        <dbReference type="ChEBI" id="CHEBI:456215"/>
        <dbReference type="EC" id="6.2.1.2"/>
    </reaction>
    <physiologicalReaction direction="left-to-right" evidence="11">
        <dbReference type="Rhea" id="RHEA:48341"/>
    </physiologicalReaction>
</comment>
<comment type="catalytic activity">
    <reaction evidence="6">
        <text>15-hydroxy-(5Z,8Z,11Z,13E)-eicosatetraenoate + ATP + CoA = 15-hydroxy-(5Z,8Z,11Z,13E)-eicosatetraenoyl-CoA + AMP + diphosphate</text>
        <dbReference type="Rhea" id="RHEA:52116"/>
        <dbReference type="ChEBI" id="CHEBI:30616"/>
        <dbReference type="ChEBI" id="CHEBI:33019"/>
        <dbReference type="ChEBI" id="CHEBI:57287"/>
        <dbReference type="ChEBI" id="CHEBI:78832"/>
        <dbReference type="ChEBI" id="CHEBI:136409"/>
        <dbReference type="ChEBI" id="CHEBI:456215"/>
    </reaction>
    <physiologicalReaction direction="left-to-right" evidence="6">
        <dbReference type="Rhea" id="RHEA:52117"/>
    </physiologicalReaction>
</comment>
<comment type="catalytic activity">
    <reaction evidence="6">
        <text>12-hydroxy-(5Z,8Z,10E,14Z)-eicosatetraenoate + ATP + CoA = 12-hydroxy-(5Z,8Z,10E,14Z)-eicosatetraenoyl-CoA + AMP + diphosphate</text>
        <dbReference type="Rhea" id="RHEA:52112"/>
        <dbReference type="ChEBI" id="CHEBI:30616"/>
        <dbReference type="ChEBI" id="CHEBI:33019"/>
        <dbReference type="ChEBI" id="CHEBI:57287"/>
        <dbReference type="ChEBI" id="CHEBI:90718"/>
        <dbReference type="ChEBI" id="CHEBI:136408"/>
        <dbReference type="ChEBI" id="CHEBI:456215"/>
    </reaction>
    <physiologicalReaction direction="left-to-right" evidence="6">
        <dbReference type="Rhea" id="RHEA:52113"/>
    </physiologicalReaction>
</comment>
<comment type="catalytic activity">
    <reaction evidence="6">
        <text>5-hydroxy-(6E,8Z,11Z,14Z)-eicosatetraenoate + ATP + CoA = 5-hydroxy-(6E,8Z,11Z,14Z)-eicosatetraenoyl-CoA + AMP + diphosphate</text>
        <dbReference type="Rhea" id="RHEA:52108"/>
        <dbReference type="ChEBI" id="CHEBI:30616"/>
        <dbReference type="ChEBI" id="CHEBI:33019"/>
        <dbReference type="ChEBI" id="CHEBI:57287"/>
        <dbReference type="ChEBI" id="CHEBI:65341"/>
        <dbReference type="ChEBI" id="CHEBI:136407"/>
        <dbReference type="ChEBI" id="CHEBI:456215"/>
    </reaction>
    <physiologicalReaction direction="left-to-right" evidence="6">
        <dbReference type="Rhea" id="RHEA:52109"/>
    </physiologicalReaction>
</comment>
<comment type="catalytic activity">
    <reaction evidence="6">
        <text>14,15-epoxy-(5Z,8Z,11Z)-eicosatrienoate + ATP + CoA = 14,15-epoxy-(5Z,8Z,11Z)-eicosatrienoyl-CoA + AMP + diphosphate</text>
        <dbReference type="Rhea" id="RHEA:52016"/>
        <dbReference type="ChEBI" id="CHEBI:30616"/>
        <dbReference type="ChEBI" id="CHEBI:33019"/>
        <dbReference type="ChEBI" id="CHEBI:57287"/>
        <dbReference type="ChEBI" id="CHEBI:84024"/>
        <dbReference type="ChEBI" id="CHEBI:136117"/>
        <dbReference type="ChEBI" id="CHEBI:456215"/>
    </reaction>
    <physiologicalReaction direction="left-to-right" evidence="6">
        <dbReference type="Rhea" id="RHEA:52017"/>
    </physiologicalReaction>
</comment>
<comment type="catalytic activity">
    <reaction evidence="6">
        <text>11,12-epoxy-(5Z,8Z,14Z)-eicosatrienoate + ATP + CoA = 11,12-epoxy-(5Z,8Z,14Z)-eicosatrienoyl-CoA + AMP + diphosphate</text>
        <dbReference type="Rhea" id="RHEA:52012"/>
        <dbReference type="ChEBI" id="CHEBI:30616"/>
        <dbReference type="ChEBI" id="CHEBI:33019"/>
        <dbReference type="ChEBI" id="CHEBI:57287"/>
        <dbReference type="ChEBI" id="CHEBI:76625"/>
        <dbReference type="ChEBI" id="CHEBI:136115"/>
        <dbReference type="ChEBI" id="CHEBI:456215"/>
    </reaction>
    <physiologicalReaction direction="left-to-right" evidence="6">
        <dbReference type="Rhea" id="RHEA:52013"/>
    </physiologicalReaction>
</comment>
<comment type="catalytic activity">
    <reaction evidence="2">
        <text>(E)-hexadec-2-enoate + ATP + CoA = (2E)-hexadecenoyl-CoA + AMP + diphosphate</text>
        <dbReference type="Rhea" id="RHEA:36139"/>
        <dbReference type="ChEBI" id="CHEBI:30616"/>
        <dbReference type="ChEBI" id="CHEBI:33019"/>
        <dbReference type="ChEBI" id="CHEBI:57287"/>
        <dbReference type="ChEBI" id="CHEBI:61526"/>
        <dbReference type="ChEBI" id="CHEBI:72745"/>
        <dbReference type="ChEBI" id="CHEBI:456215"/>
    </reaction>
    <physiologicalReaction direction="left-to-right" evidence="2">
        <dbReference type="Rhea" id="RHEA:36140"/>
    </physiologicalReaction>
</comment>
<comment type="catalytic activity">
    <reaction evidence="7 8">
        <text>hexadecanoate + ATP + CoA = hexadecanoyl-CoA + AMP + diphosphate</text>
        <dbReference type="Rhea" id="RHEA:30751"/>
        <dbReference type="ChEBI" id="CHEBI:7896"/>
        <dbReference type="ChEBI" id="CHEBI:30616"/>
        <dbReference type="ChEBI" id="CHEBI:33019"/>
        <dbReference type="ChEBI" id="CHEBI:57287"/>
        <dbReference type="ChEBI" id="CHEBI:57379"/>
        <dbReference type="ChEBI" id="CHEBI:456215"/>
    </reaction>
    <physiologicalReaction direction="left-to-right" evidence="12">
        <dbReference type="Rhea" id="RHEA:30752"/>
    </physiologicalReaction>
</comment>
<comment type="catalytic activity">
    <reaction evidence="7 8">
        <text>tetradecanoate + ATP + CoA = tetradecanoyl-CoA + AMP + diphosphate</text>
        <dbReference type="Rhea" id="RHEA:33619"/>
        <dbReference type="ChEBI" id="CHEBI:30616"/>
        <dbReference type="ChEBI" id="CHEBI:30807"/>
        <dbReference type="ChEBI" id="CHEBI:33019"/>
        <dbReference type="ChEBI" id="CHEBI:57287"/>
        <dbReference type="ChEBI" id="CHEBI:57385"/>
        <dbReference type="ChEBI" id="CHEBI:456215"/>
    </reaction>
    <physiologicalReaction direction="left-to-right" evidence="12">
        <dbReference type="Rhea" id="RHEA:33620"/>
    </physiologicalReaction>
</comment>
<comment type="catalytic activity">
    <reaction evidence="7">
        <text>dodecanoate + ATP + CoA = dodecanoyl-CoA + AMP + diphosphate</text>
        <dbReference type="Rhea" id="RHEA:33623"/>
        <dbReference type="ChEBI" id="CHEBI:18262"/>
        <dbReference type="ChEBI" id="CHEBI:30616"/>
        <dbReference type="ChEBI" id="CHEBI:33019"/>
        <dbReference type="ChEBI" id="CHEBI:57287"/>
        <dbReference type="ChEBI" id="CHEBI:57375"/>
        <dbReference type="ChEBI" id="CHEBI:456215"/>
    </reaction>
    <physiologicalReaction direction="left-to-right" evidence="11">
        <dbReference type="Rhea" id="RHEA:33624"/>
    </physiologicalReaction>
</comment>
<comment type="catalytic activity">
    <reaction evidence="7">
        <text>octadecanoate + ATP + CoA = octadecanoyl-CoA + AMP + diphosphate</text>
        <dbReference type="Rhea" id="RHEA:33615"/>
        <dbReference type="ChEBI" id="CHEBI:25629"/>
        <dbReference type="ChEBI" id="CHEBI:30616"/>
        <dbReference type="ChEBI" id="CHEBI:33019"/>
        <dbReference type="ChEBI" id="CHEBI:57287"/>
        <dbReference type="ChEBI" id="CHEBI:57394"/>
        <dbReference type="ChEBI" id="CHEBI:456215"/>
    </reaction>
    <physiologicalReaction direction="left-to-right" evidence="11">
        <dbReference type="Rhea" id="RHEA:33616"/>
    </physiologicalReaction>
</comment>
<comment type="catalytic activity">
    <reaction evidence="7">
        <text>eicosanoate + ATP + CoA = eicosanoyl-CoA + AMP + diphosphate</text>
        <dbReference type="Rhea" id="RHEA:46208"/>
        <dbReference type="ChEBI" id="CHEBI:30616"/>
        <dbReference type="ChEBI" id="CHEBI:32360"/>
        <dbReference type="ChEBI" id="CHEBI:33019"/>
        <dbReference type="ChEBI" id="CHEBI:57287"/>
        <dbReference type="ChEBI" id="CHEBI:57380"/>
        <dbReference type="ChEBI" id="CHEBI:456215"/>
    </reaction>
    <physiologicalReaction direction="left-to-right" evidence="11">
        <dbReference type="Rhea" id="RHEA:46209"/>
    </physiologicalReaction>
</comment>
<comment type="catalytic activity">
    <reaction evidence="7">
        <text>(9Z)-octadecenoate + ATP + CoA = (9Z)-octadecenoyl-CoA + AMP + diphosphate</text>
        <dbReference type="Rhea" id="RHEA:33607"/>
        <dbReference type="ChEBI" id="CHEBI:30616"/>
        <dbReference type="ChEBI" id="CHEBI:30823"/>
        <dbReference type="ChEBI" id="CHEBI:33019"/>
        <dbReference type="ChEBI" id="CHEBI:57287"/>
        <dbReference type="ChEBI" id="CHEBI:57387"/>
        <dbReference type="ChEBI" id="CHEBI:456215"/>
    </reaction>
    <physiologicalReaction direction="left-to-right" evidence="11">
        <dbReference type="Rhea" id="RHEA:33608"/>
    </physiologicalReaction>
</comment>
<comment type="catalytic activity">
    <reaction evidence="7">
        <text>(9Z)-hexadecenoate + ATP + CoA = (9Z)-hexadecenoyl-CoA + AMP + diphosphate</text>
        <dbReference type="Rhea" id="RHEA:33647"/>
        <dbReference type="ChEBI" id="CHEBI:30616"/>
        <dbReference type="ChEBI" id="CHEBI:32372"/>
        <dbReference type="ChEBI" id="CHEBI:33019"/>
        <dbReference type="ChEBI" id="CHEBI:57287"/>
        <dbReference type="ChEBI" id="CHEBI:61540"/>
        <dbReference type="ChEBI" id="CHEBI:456215"/>
    </reaction>
    <physiologicalReaction direction="left-to-right" evidence="11">
        <dbReference type="Rhea" id="RHEA:33648"/>
    </physiologicalReaction>
</comment>
<comment type="catalytic activity">
    <reaction evidence="7">
        <text>(9Z,12Z)-octadecadienoate + ATP + CoA = (9Z,12Z)-octadecadienoyl-CoA + AMP + diphosphate</text>
        <dbReference type="Rhea" id="RHEA:33651"/>
        <dbReference type="ChEBI" id="CHEBI:30245"/>
        <dbReference type="ChEBI" id="CHEBI:30616"/>
        <dbReference type="ChEBI" id="CHEBI:33019"/>
        <dbReference type="ChEBI" id="CHEBI:57287"/>
        <dbReference type="ChEBI" id="CHEBI:57383"/>
        <dbReference type="ChEBI" id="CHEBI:456215"/>
    </reaction>
</comment>
<comment type="catalytic activity">
    <reaction evidence="7">
        <text>(9Z,12Z,15Z)-octadecatrienoate + ATP + CoA = (9Z,12Z,15Z)-octadecatrienoyl-CoA + AMP + diphosphate</text>
        <dbReference type="Rhea" id="RHEA:44936"/>
        <dbReference type="ChEBI" id="CHEBI:30616"/>
        <dbReference type="ChEBI" id="CHEBI:32387"/>
        <dbReference type="ChEBI" id="CHEBI:33019"/>
        <dbReference type="ChEBI" id="CHEBI:57287"/>
        <dbReference type="ChEBI" id="CHEBI:74034"/>
        <dbReference type="ChEBI" id="CHEBI:456215"/>
    </reaction>
    <physiologicalReaction direction="left-to-right" evidence="11">
        <dbReference type="Rhea" id="RHEA:44937"/>
    </physiologicalReaction>
</comment>
<comment type="catalytic activity">
    <reaction evidence="7">
        <text>(4Z,7Z,10Z,13Z,16Z,19Z)-docosahexaenoate + ATP + CoA = (4Z,7Z,10Z,13Z,16Z,19Z)-docosahexaenoyl-CoA + AMP + diphosphate</text>
        <dbReference type="Rhea" id="RHEA:44932"/>
        <dbReference type="ChEBI" id="CHEBI:30616"/>
        <dbReference type="ChEBI" id="CHEBI:33019"/>
        <dbReference type="ChEBI" id="CHEBI:57287"/>
        <dbReference type="ChEBI" id="CHEBI:74298"/>
        <dbReference type="ChEBI" id="CHEBI:77016"/>
        <dbReference type="ChEBI" id="CHEBI:456215"/>
    </reaction>
    <physiologicalReaction direction="left-to-right" evidence="11">
        <dbReference type="Rhea" id="RHEA:44933"/>
    </physiologicalReaction>
</comment>
<comment type="catalytic activity">
    <reaction evidence="7">
        <text>(5Z,8Z,11Z,14Z,17Z)-eicosapentaenoate + ATP + CoA = (5Z,8Z,11Z,14Z,17Z)-eicosapentaenoyl-CoA + AMP + diphosphate</text>
        <dbReference type="Rhea" id="RHEA:67848"/>
        <dbReference type="ChEBI" id="CHEBI:30616"/>
        <dbReference type="ChEBI" id="CHEBI:33019"/>
        <dbReference type="ChEBI" id="CHEBI:57287"/>
        <dbReference type="ChEBI" id="CHEBI:58562"/>
        <dbReference type="ChEBI" id="CHEBI:73862"/>
        <dbReference type="ChEBI" id="CHEBI:456215"/>
    </reaction>
    <physiologicalReaction direction="left-to-right" evidence="11">
        <dbReference type="Rhea" id="RHEA:67849"/>
    </physiologicalReaction>
</comment>
<comment type="catalytic activity">
    <reaction evidence="7 8">
        <text>a fatty acid + ATP + CoA = a fatty acyl-CoA + AMP + diphosphate</text>
        <dbReference type="Rhea" id="RHEA:38883"/>
        <dbReference type="ChEBI" id="CHEBI:28868"/>
        <dbReference type="ChEBI" id="CHEBI:30616"/>
        <dbReference type="ChEBI" id="CHEBI:33019"/>
        <dbReference type="ChEBI" id="CHEBI:57287"/>
        <dbReference type="ChEBI" id="CHEBI:77636"/>
        <dbReference type="ChEBI" id="CHEBI:456215"/>
    </reaction>
    <physiologicalReaction direction="left-to-right" evidence="11">
        <dbReference type="Rhea" id="RHEA:38884"/>
    </physiologicalReaction>
</comment>
<comment type="cofactor">
    <cofactor evidence="1">
        <name>Mg(2+)</name>
        <dbReference type="ChEBI" id="CHEBI:18420"/>
    </cofactor>
</comment>
<comment type="biophysicochemical properties">
    <kinetics>
        <KM evidence="4">402 uM for ATP</KM>
        <KM evidence="4">3 uM for CoA</KM>
        <KM evidence="4">4.3 uM for palmitate</KM>
        <KM evidence="4">5.1 uM for oleate</KM>
        <KM evidence="4">8.9 uM for arachidonate</KM>
        <KM evidence="6">4 uM for palmitate (when expressed in bacteria)</KM>
        <KM evidence="6">3.1 uM for stearate (when expressed in bacteria)</KM>
        <KM evidence="6">5.3 uM for oleate (when expressed in bacteria)</KM>
        <KM evidence="6">7.3 uM for linoleate (when expressed in bacteria)</KM>
        <KM evidence="6">4.3 uM for arachidonate (when expressed in bacteria)</KM>
        <Vmax evidence="4">2306.0 nmol/min/mg enzyme with palmitate as substrate</Vmax>
        <Vmax evidence="4">2399.0 nmol/min/mg enzyme with oleate as substrate</Vmax>
        <Vmax evidence="4">4022.0 nmol/min/mg enzyme with arachidonate as substrate</Vmax>
        <Vmax evidence="6">2763.0 nmol/min/mg enzyme with palmitate as substrate (when expressed in bacteria)</Vmax>
        <Vmax evidence="6">2099.0 nmol/min/mg enzyme with stearate as substrate (when expressed in bacteria)</Vmax>
        <Vmax evidence="6">2109.0 nmol/min/mg enzyme with oleate as substrate (when expressed in bacteria)</Vmax>
        <Vmax evidence="6">1394.0 nmol/min/mg enzyme with linoleate as substrate (when expressed in bacteria)</Vmax>
        <Vmax evidence="6">2627.0 nmol/min/mg enzyme with arachidonate as substrate (when expressed in bacteria)</Vmax>
    </kinetics>
</comment>
<comment type="subcellular location">
    <subcellularLocation>
        <location evidence="1">Mitochondrion outer membrane</location>
        <topology evidence="1">Single-pass type III membrane protein</topology>
    </subcellularLocation>
    <subcellularLocation>
        <location evidence="1">Peroxisome membrane</location>
        <topology evidence="1">Single-pass type III membrane protein</topology>
    </subcellularLocation>
    <subcellularLocation>
        <location evidence="1">Microsome membrane</location>
        <topology evidence="1">Single-pass type III membrane protein</topology>
    </subcellularLocation>
    <subcellularLocation>
        <location evidence="1">Endoplasmic reticulum membrane</location>
        <topology evidence="1">Single-pass type III membrane protein</topology>
    </subcellularLocation>
</comment>
<comment type="alternative products">
    <event type="alternative initiation"/>
    <isoform>
        <id>Q63151-1</id>
        <name>Long</name>
        <sequence type="displayed"/>
    </isoform>
    <isoform>
        <id>Q63151-2</id>
        <name>Short</name>
        <sequence type="described" ref="VSP_018649"/>
    </isoform>
</comment>
<comment type="tissue specificity">
    <text>Predominantly expressed in the brain, and to a much lesser extent, in lung, adrenal gland, kidney, small intestine, and adipose tissue but not detected in heart or liver.</text>
</comment>
<comment type="developmental stage">
    <text>Detected 5 days after birth, increased to a maximal level at 15 days, and then decreased gradually to 10% of its maximum level in adult.</text>
</comment>
<comment type="miscellaneous">
    <text evidence="9">5 rat isozymes encoded by different genes have been described. ACSL6 corresponds to isozyme 2 (ACS2).</text>
</comment>
<comment type="similarity">
    <text evidence="10">Belongs to the ATP-dependent AMP-binding enzyme family.</text>
</comment>
<evidence type="ECO:0000250" key="1"/>
<evidence type="ECO:0000250" key="2">
    <source>
        <dbReference type="UniProtKB" id="O95573"/>
    </source>
</evidence>
<evidence type="ECO:0000255" key="3"/>
<evidence type="ECO:0000269" key="4">
    <source>
    </source>
</evidence>
<evidence type="ECO:0000269" key="5">
    <source>
    </source>
</evidence>
<evidence type="ECO:0000269" key="6">
    <source>
    </source>
</evidence>
<evidence type="ECO:0000269" key="7">
    <source>
    </source>
</evidence>
<evidence type="ECO:0000269" key="8">
    <source>
    </source>
</evidence>
<evidence type="ECO:0000303" key="9">
    <source>
    </source>
</evidence>
<evidence type="ECO:0000305" key="10"/>
<evidence type="ECO:0000305" key="11">
    <source>
    </source>
</evidence>
<evidence type="ECO:0000305" key="12">
    <source>
    </source>
</evidence>
<evidence type="ECO:0000312" key="13">
    <source>
        <dbReference type="RGD" id="70552"/>
    </source>
</evidence>
<name>ACSL3_RAT</name>
<feature type="chain" id="PRO_0000001313" description="Fatty acid CoA ligase Acsl3">
    <location>
        <begin position="1"/>
        <end position="720"/>
    </location>
</feature>
<feature type="transmembrane region" description="Helical; Signal-anchor for type III membrane protein" evidence="3">
    <location>
        <begin position="21"/>
        <end position="41"/>
    </location>
</feature>
<feature type="topological domain" description="Cytoplasmic" evidence="3">
    <location>
        <begin position="42"/>
        <end position="720"/>
    </location>
</feature>
<feature type="modified residue" description="Phosphoserine" evidence="2">
    <location>
        <position position="683"/>
    </location>
</feature>
<feature type="splice variant" id="VSP_018649" description="In isoform Short." evidence="10">
    <location>
        <begin position="1"/>
        <end position="11"/>
    </location>
</feature>
<proteinExistence type="evidence at protein level"/>
<sequence>MNNHVSSTPSTMKLKQTIHPILLYFIHFIISLYTILTYIPFYFLCESKQEKPNHIKAKPVSSKPDSAYRSVNSMDGLASVLYPGCDTLDKVFMYAKNKFKDKRLLGTREILNEEDEIQPNGKVFKKVILGHYNWLSYEDVFIRALDFGNGLQMLGQKPKANIAIFCETRAEWMIAAQACFMYNFQLVTLYATLGGPAIVHGLNETEVTNIITSKELLQTKLKDIVSLVPRLRHIITVDGKPPTWSEFPKGVIVHTMAAVQALGVKADVDKKAHSKPLPSDIAVIMYTSGSTGIPKGVMISHSNIIASITGMARRIPRLGEEDVYIGYLPLAHVLELSAELVCLSHGCRIGYSSPQTLADQSSKIKKGSKGDTSVLKPTLMAAVPEIMDRIYKNVMNKVNEMSAFQRNLFILAYNYKMEQISKGCSTPLCDRFVFRNVRRLLGGNIRVLLCGGAPLSATTQRFMNICFCCPVGQGYGLTESTGAGTITEVWDYNTGRVGAPLVCCEIKLKNWEEGGYFNTDKPHPRGEILIGGQNVTMGYYKNEAKTKADFFEDENGQRWLCTGDIGEFDPDGCLKIIDRKKDLVKLQAGEYVSLGKVEAALKNLPLIDNICAYANSYHSYVIGFVVPNQKELTELARTKGFNGTWEELCNSSEMENEVLKVLSEAAISASLEKFEIPLKIRLSPDPWTPETGLVTDAFKLKRKELKTHYQADIERMYGRK</sequence>
<reference key="1">
    <citation type="journal article" date="1996" name="J. Biol. Chem.">
        <title>Molecular characterization and expression of rat acyl-CoA synthetase 3.</title>
        <authorList>
            <person name="Fujino T."/>
            <person name="Kang M.-J."/>
            <person name="Suzuki H."/>
            <person name="Iijima H."/>
            <person name="Yamamoto T.T."/>
        </authorList>
    </citation>
    <scope>NUCLEOTIDE SEQUENCE [MRNA]</scope>
    <scope>FUNCTION</scope>
    <scope>CATALYTIC ACTIVITY</scope>
    <source>
        <strain>Wistar</strain>
        <tissue>Brain</tissue>
    </source>
</reference>
<reference key="2">
    <citation type="journal article" date="1997" name="J. Biochem.">
        <title>Alternative translation initiation generates acyl-CoA synthetase 3 isoforms with heterogeneous amino termini.</title>
        <authorList>
            <person name="Fujino T."/>
            <person name="Kang M.-J."/>
            <person name="Minekura H."/>
            <person name="Suzuki H."/>
            <person name="Yamamoto T.T."/>
        </authorList>
    </citation>
    <scope>ALTERNATIVE INITIATION</scope>
    <scope>FUNCTION</scope>
    <scope>CATALYTIC ACTIVITY</scope>
</reference>
<reference key="3">
    <citation type="journal article" date="2005" name="Biochemistry">
        <title>Characterization of recombinant long-chain rat acyl-CoA synthetase isoforms 3 and 6: identification of a novel variant of isoform 6.</title>
        <authorList>
            <person name="Van Horn C.G."/>
            <person name="Caviglia J.M."/>
            <person name="Li L.O."/>
            <person name="Wang S."/>
            <person name="Granger D.A."/>
            <person name="Coleman R.A."/>
        </authorList>
    </citation>
    <scope>BIOPHYSICOCHEMICAL PROPERTIES</scope>
    <scope>FUNCTION</scope>
    <scope>CATALYTIC ACTIVITY</scope>
    <source>
        <tissue>Brain</tissue>
    </source>
</reference>
<reference key="4">
    <citation type="journal article" date="2009" name="J. Biol. Chem.">
        <title>Suppression of long chain acyl-CoA synthetase 3 (ACSL3) decreases hepatic de novo fatty acid synthesis through decreased transcriptional activity.</title>
        <authorList>
            <person name="Bu S.Y."/>
            <person name="Mashek M.T."/>
            <person name="Mashek D.G."/>
        </authorList>
    </citation>
    <scope>FUNCTION</scope>
    <scope>CATALYTIC ACTIVITY</scope>
</reference>
<reference key="5">
    <citation type="journal article" date="2017" name="J. Lipid Res.">
        <title>Long-chain acyl-CoA synthetase isoforms differ in preferences for eicosanoid species and long-chain fatty acids.</title>
        <authorList>
            <person name="Klett E.L."/>
            <person name="Chen S."/>
            <person name="Yechoor A."/>
            <person name="Lih F.B."/>
            <person name="Coleman R.A."/>
        </authorList>
    </citation>
    <scope>CATALYTIC ACTIVITY</scope>
    <scope>FUNCTION</scope>
    <scope>BIOPHYSICOCHEMICAL PROPERTIES</scope>
</reference>
<reference key="6">
    <citation type="journal article" date="2017" name="J. Lipid Res.">
        <authorList>
            <person name="Klett E.L."/>
            <person name="Chen S."/>
            <person name="Yechoor A."/>
            <person name="Lih F.B."/>
            <person name="Coleman R.A."/>
        </authorList>
    </citation>
    <scope>ERRATUM OF PUBMED:28209804</scope>
</reference>
<keyword id="KW-0024">Alternative initiation</keyword>
<keyword id="KW-0067">ATP-binding</keyword>
<keyword id="KW-0256">Endoplasmic reticulum</keyword>
<keyword id="KW-0276">Fatty acid metabolism</keyword>
<keyword id="KW-0436">Ligase</keyword>
<keyword id="KW-0443">Lipid metabolism</keyword>
<keyword id="KW-0460">Magnesium</keyword>
<keyword id="KW-0472">Membrane</keyword>
<keyword id="KW-0492">Microsome</keyword>
<keyword id="KW-0496">Mitochondrion</keyword>
<keyword id="KW-1000">Mitochondrion outer membrane</keyword>
<keyword id="KW-0547">Nucleotide-binding</keyword>
<keyword id="KW-0576">Peroxisome</keyword>
<keyword id="KW-0597">Phosphoprotein</keyword>
<keyword id="KW-1185">Reference proteome</keyword>
<keyword id="KW-0735">Signal-anchor</keyword>
<keyword id="KW-0812">Transmembrane</keyword>
<keyword id="KW-1133">Transmembrane helix</keyword>